<keyword id="KW-0687">Ribonucleoprotein</keyword>
<keyword id="KW-0689">Ribosomal protein</keyword>
<keyword id="KW-0694">RNA-binding</keyword>
<keyword id="KW-0699">rRNA-binding</keyword>
<organism>
    <name type="scientific">Cupriavidus taiwanensis (strain DSM 17343 / BCRC 17206 / CCUG 44338 / CIP 107171 / LMG 19424 / R1)</name>
    <name type="common">Ralstonia taiwanensis (strain LMG 19424)</name>
    <dbReference type="NCBI Taxonomy" id="977880"/>
    <lineage>
        <taxon>Bacteria</taxon>
        <taxon>Pseudomonadati</taxon>
        <taxon>Pseudomonadota</taxon>
        <taxon>Betaproteobacteria</taxon>
        <taxon>Burkholderiales</taxon>
        <taxon>Burkholderiaceae</taxon>
        <taxon>Cupriavidus</taxon>
    </lineage>
</organism>
<feature type="chain" id="PRO_1000143778" description="Large ribosomal subunit protein bL21">
    <location>
        <begin position="1"/>
        <end position="103"/>
    </location>
</feature>
<proteinExistence type="inferred from homology"/>
<evidence type="ECO:0000255" key="1">
    <source>
        <dbReference type="HAMAP-Rule" id="MF_01363"/>
    </source>
</evidence>
<evidence type="ECO:0000305" key="2"/>
<reference key="1">
    <citation type="journal article" date="2008" name="Genome Res.">
        <title>Genome sequence of the beta-rhizobium Cupriavidus taiwanensis and comparative genomics of rhizobia.</title>
        <authorList>
            <person name="Amadou C."/>
            <person name="Pascal G."/>
            <person name="Mangenot S."/>
            <person name="Glew M."/>
            <person name="Bontemps C."/>
            <person name="Capela D."/>
            <person name="Carrere S."/>
            <person name="Cruveiller S."/>
            <person name="Dossat C."/>
            <person name="Lajus A."/>
            <person name="Marchetti M."/>
            <person name="Poinsot V."/>
            <person name="Rouy Z."/>
            <person name="Servin B."/>
            <person name="Saad M."/>
            <person name="Schenowitz C."/>
            <person name="Barbe V."/>
            <person name="Batut J."/>
            <person name="Medigue C."/>
            <person name="Masson-Boivin C."/>
        </authorList>
    </citation>
    <scope>NUCLEOTIDE SEQUENCE [LARGE SCALE GENOMIC DNA]</scope>
    <source>
        <strain>DSM 17343 / BCRC 17206 / CCUG 44338 / CIP 107171 / LMG 19424 / R1</strain>
    </source>
</reference>
<gene>
    <name evidence="1" type="primary">rplU</name>
    <name type="ordered locus">RALTA_A2705</name>
</gene>
<accession>B3R8A0</accession>
<sequence>MYAVVKTGGKQYKVAAGEKLKVEQIPADIGAEITLDQVLAVGAGDQIKFGTPLVSGASVKATVISQGRHDKVKIFKMRRRKHYQKRQGHRQNYTELRIEAIVA</sequence>
<protein>
    <recommendedName>
        <fullName evidence="1">Large ribosomal subunit protein bL21</fullName>
    </recommendedName>
    <alternativeName>
        <fullName evidence="2">50S ribosomal protein L21</fullName>
    </alternativeName>
</protein>
<comment type="function">
    <text evidence="1">This protein binds to 23S rRNA in the presence of protein L20.</text>
</comment>
<comment type="subunit">
    <text evidence="1">Part of the 50S ribosomal subunit. Contacts protein L20.</text>
</comment>
<comment type="similarity">
    <text evidence="1">Belongs to the bacterial ribosomal protein bL21 family.</text>
</comment>
<name>RL21_CUPTR</name>
<dbReference type="EMBL" id="CU633749">
    <property type="protein sequence ID" value="CAQ70636.1"/>
    <property type="molecule type" value="Genomic_DNA"/>
</dbReference>
<dbReference type="RefSeq" id="WP_006576525.1">
    <property type="nucleotide sequence ID" value="NC_010528.1"/>
</dbReference>
<dbReference type="SMR" id="B3R8A0"/>
<dbReference type="GeneID" id="70691269"/>
<dbReference type="KEGG" id="cti:RALTA_A2705"/>
<dbReference type="eggNOG" id="COG0261">
    <property type="taxonomic scope" value="Bacteria"/>
</dbReference>
<dbReference type="HOGENOM" id="CLU_061463_3_2_4"/>
<dbReference type="BioCyc" id="CTAI977880:RALTA_RS13160-MONOMER"/>
<dbReference type="Proteomes" id="UP000001692">
    <property type="component" value="Chromosome 1"/>
</dbReference>
<dbReference type="GO" id="GO:0005737">
    <property type="term" value="C:cytoplasm"/>
    <property type="evidence" value="ECO:0007669"/>
    <property type="project" value="UniProtKB-ARBA"/>
</dbReference>
<dbReference type="GO" id="GO:1990904">
    <property type="term" value="C:ribonucleoprotein complex"/>
    <property type="evidence" value="ECO:0007669"/>
    <property type="project" value="UniProtKB-KW"/>
</dbReference>
<dbReference type="GO" id="GO:0005840">
    <property type="term" value="C:ribosome"/>
    <property type="evidence" value="ECO:0007669"/>
    <property type="project" value="UniProtKB-KW"/>
</dbReference>
<dbReference type="GO" id="GO:0019843">
    <property type="term" value="F:rRNA binding"/>
    <property type="evidence" value="ECO:0007669"/>
    <property type="project" value="UniProtKB-UniRule"/>
</dbReference>
<dbReference type="GO" id="GO:0003735">
    <property type="term" value="F:structural constituent of ribosome"/>
    <property type="evidence" value="ECO:0007669"/>
    <property type="project" value="InterPro"/>
</dbReference>
<dbReference type="GO" id="GO:0006412">
    <property type="term" value="P:translation"/>
    <property type="evidence" value="ECO:0007669"/>
    <property type="project" value="UniProtKB-UniRule"/>
</dbReference>
<dbReference type="HAMAP" id="MF_01363">
    <property type="entry name" value="Ribosomal_bL21"/>
    <property type="match status" value="1"/>
</dbReference>
<dbReference type="InterPro" id="IPR028909">
    <property type="entry name" value="bL21-like"/>
</dbReference>
<dbReference type="InterPro" id="IPR036164">
    <property type="entry name" value="bL21-like_sf"/>
</dbReference>
<dbReference type="InterPro" id="IPR001787">
    <property type="entry name" value="Ribosomal_bL21"/>
</dbReference>
<dbReference type="InterPro" id="IPR018258">
    <property type="entry name" value="Ribosomal_bL21_CS"/>
</dbReference>
<dbReference type="NCBIfam" id="TIGR00061">
    <property type="entry name" value="L21"/>
    <property type="match status" value="1"/>
</dbReference>
<dbReference type="PANTHER" id="PTHR21349">
    <property type="entry name" value="50S RIBOSOMAL PROTEIN L21"/>
    <property type="match status" value="1"/>
</dbReference>
<dbReference type="PANTHER" id="PTHR21349:SF0">
    <property type="entry name" value="LARGE RIBOSOMAL SUBUNIT PROTEIN BL21M"/>
    <property type="match status" value="1"/>
</dbReference>
<dbReference type="Pfam" id="PF00829">
    <property type="entry name" value="Ribosomal_L21p"/>
    <property type="match status" value="1"/>
</dbReference>
<dbReference type="SUPFAM" id="SSF141091">
    <property type="entry name" value="L21p-like"/>
    <property type="match status" value="1"/>
</dbReference>
<dbReference type="PROSITE" id="PS01169">
    <property type="entry name" value="RIBOSOMAL_L21"/>
    <property type="match status" value="1"/>
</dbReference>